<evidence type="ECO:0000250" key="1"/>
<evidence type="ECO:0000255" key="2">
    <source>
        <dbReference type="HAMAP-Rule" id="MF_00403"/>
    </source>
</evidence>
<evidence type="ECO:0000256" key="3">
    <source>
        <dbReference type="SAM" id="MobiDB-lite"/>
    </source>
</evidence>
<evidence type="ECO:0000305" key="4"/>
<reference key="1">
    <citation type="journal article" date="2007" name="J. Bacteriol.">
        <title>The complete genome sequence of the lactic acid bacterial paradigm Lactococcus lactis subsp. cremoris MG1363.</title>
        <authorList>
            <person name="Wegmann U."/>
            <person name="O'Connell-Motherway M."/>
            <person name="Zomer A."/>
            <person name="Buist G."/>
            <person name="Shearman C."/>
            <person name="Canchaya C."/>
            <person name="Ventura M."/>
            <person name="Goesmann A."/>
            <person name="Gasson M.J."/>
            <person name="Kuipers O.P."/>
            <person name="van Sinderen D."/>
            <person name="Kok J."/>
        </authorList>
    </citation>
    <scope>NUCLEOTIDE SEQUENCE [LARGE SCALE GENOMIC DNA]</scope>
    <source>
        <strain>MG1363</strain>
    </source>
</reference>
<sequence length="137" mass="15124">MPTINQLVRKPRRAQVTKSKSPAMNVGYNSRKKVQTKLASPQKRGVATRVGTMTPKKPNSALRKFARVRLSNLMEVTAYIPGIGHNLQEHSVVLLRGGRVKDLPGVRYHIVRGALDTAGVADRKQSRSKYGAKKPKA</sequence>
<comment type="function">
    <text evidence="2">With S4 and S5 plays an important role in translational accuracy.</text>
</comment>
<comment type="function">
    <text evidence="2">Interacts with and stabilizes bases of the 16S rRNA that are involved in tRNA selection in the A site and with the mRNA backbone. Located at the interface of the 30S and 50S subunits, it traverses the body of the 30S subunit contacting proteins on the other side and probably holding the rRNA structure together. The combined cluster of proteins S8, S12 and S17 appears to hold together the shoulder and platform of the 30S subunit.</text>
</comment>
<comment type="subunit">
    <text evidence="2">Part of the 30S ribosomal subunit. Contacts proteins S8 and S17. May interact with IF1 in the 30S initiation complex.</text>
</comment>
<comment type="similarity">
    <text evidence="2">Belongs to the universal ribosomal protein uS12 family.</text>
</comment>
<name>RS12_LACLM</name>
<organism>
    <name type="scientific">Lactococcus lactis subsp. cremoris (strain MG1363)</name>
    <dbReference type="NCBI Taxonomy" id="416870"/>
    <lineage>
        <taxon>Bacteria</taxon>
        <taxon>Bacillati</taxon>
        <taxon>Bacillota</taxon>
        <taxon>Bacilli</taxon>
        <taxon>Lactobacillales</taxon>
        <taxon>Streptococcaceae</taxon>
        <taxon>Lactococcus</taxon>
        <taxon>Lactococcus cremoris subsp. cremoris</taxon>
    </lineage>
</organism>
<gene>
    <name evidence="2" type="primary">rpsL</name>
    <name type="ordered locus">llmg_2558</name>
</gene>
<dbReference type="EMBL" id="AM406671">
    <property type="protein sequence ID" value="CAL99120.1"/>
    <property type="molecule type" value="Genomic_DNA"/>
</dbReference>
<dbReference type="RefSeq" id="WP_003129874.1">
    <property type="nucleotide sequence ID" value="NZ_WJVF01000037.1"/>
</dbReference>
<dbReference type="PDB" id="5MYJ">
    <property type="method" value="EM"/>
    <property type="resolution" value="5.60 A"/>
    <property type="chains" value="AL=1-137"/>
</dbReference>
<dbReference type="PDBsum" id="5MYJ"/>
<dbReference type="EMDB" id="EMD-3581"/>
<dbReference type="SMR" id="A2RP74"/>
<dbReference type="STRING" id="416870.llmg_2558"/>
<dbReference type="GeneID" id="89634664"/>
<dbReference type="KEGG" id="llm:llmg_2558"/>
<dbReference type="eggNOG" id="COG0048">
    <property type="taxonomic scope" value="Bacteria"/>
</dbReference>
<dbReference type="HOGENOM" id="CLU_104295_1_2_9"/>
<dbReference type="OrthoDB" id="9802366at2"/>
<dbReference type="PhylomeDB" id="A2RP74"/>
<dbReference type="Proteomes" id="UP000000364">
    <property type="component" value="Chromosome"/>
</dbReference>
<dbReference type="GO" id="GO:0015935">
    <property type="term" value="C:small ribosomal subunit"/>
    <property type="evidence" value="ECO:0007669"/>
    <property type="project" value="InterPro"/>
</dbReference>
<dbReference type="GO" id="GO:0019843">
    <property type="term" value="F:rRNA binding"/>
    <property type="evidence" value="ECO:0007669"/>
    <property type="project" value="UniProtKB-UniRule"/>
</dbReference>
<dbReference type="GO" id="GO:0003735">
    <property type="term" value="F:structural constituent of ribosome"/>
    <property type="evidence" value="ECO:0007669"/>
    <property type="project" value="InterPro"/>
</dbReference>
<dbReference type="GO" id="GO:0000049">
    <property type="term" value="F:tRNA binding"/>
    <property type="evidence" value="ECO:0007669"/>
    <property type="project" value="UniProtKB-UniRule"/>
</dbReference>
<dbReference type="GO" id="GO:0006412">
    <property type="term" value="P:translation"/>
    <property type="evidence" value="ECO:0007669"/>
    <property type="project" value="UniProtKB-UniRule"/>
</dbReference>
<dbReference type="CDD" id="cd03368">
    <property type="entry name" value="Ribosomal_S12"/>
    <property type="match status" value="1"/>
</dbReference>
<dbReference type="FunFam" id="2.40.50.140:FF:000001">
    <property type="entry name" value="30S ribosomal protein S12"/>
    <property type="match status" value="1"/>
</dbReference>
<dbReference type="Gene3D" id="2.40.50.140">
    <property type="entry name" value="Nucleic acid-binding proteins"/>
    <property type="match status" value="1"/>
</dbReference>
<dbReference type="HAMAP" id="MF_00403_B">
    <property type="entry name" value="Ribosomal_uS12_B"/>
    <property type="match status" value="1"/>
</dbReference>
<dbReference type="InterPro" id="IPR012340">
    <property type="entry name" value="NA-bd_OB-fold"/>
</dbReference>
<dbReference type="InterPro" id="IPR006032">
    <property type="entry name" value="Ribosomal_uS12"/>
</dbReference>
<dbReference type="InterPro" id="IPR005679">
    <property type="entry name" value="Ribosomal_uS12_bac"/>
</dbReference>
<dbReference type="NCBIfam" id="TIGR00981">
    <property type="entry name" value="rpsL_bact"/>
    <property type="match status" value="1"/>
</dbReference>
<dbReference type="PANTHER" id="PTHR11652">
    <property type="entry name" value="30S RIBOSOMAL PROTEIN S12 FAMILY MEMBER"/>
    <property type="match status" value="1"/>
</dbReference>
<dbReference type="Pfam" id="PF00164">
    <property type="entry name" value="Ribosom_S12_S23"/>
    <property type="match status" value="1"/>
</dbReference>
<dbReference type="PIRSF" id="PIRSF002133">
    <property type="entry name" value="Ribosomal_S12/S23"/>
    <property type="match status" value="1"/>
</dbReference>
<dbReference type="PRINTS" id="PR01034">
    <property type="entry name" value="RIBOSOMALS12"/>
</dbReference>
<dbReference type="SUPFAM" id="SSF50249">
    <property type="entry name" value="Nucleic acid-binding proteins"/>
    <property type="match status" value="1"/>
</dbReference>
<dbReference type="PROSITE" id="PS00055">
    <property type="entry name" value="RIBOSOMAL_S12"/>
    <property type="match status" value="1"/>
</dbReference>
<proteinExistence type="evidence at protein level"/>
<feature type="chain" id="PRO_0000295990" description="Small ribosomal subunit protein uS12">
    <location>
        <begin position="1"/>
        <end position="137"/>
    </location>
</feature>
<feature type="region of interest" description="Disordered" evidence="3">
    <location>
        <begin position="1"/>
        <end position="57"/>
    </location>
</feature>
<feature type="modified residue" description="3-methylthioaspartic acid" evidence="1">
    <location>
        <position position="102"/>
    </location>
</feature>
<accession>A2RP74</accession>
<keyword id="KW-0002">3D-structure</keyword>
<keyword id="KW-0488">Methylation</keyword>
<keyword id="KW-0687">Ribonucleoprotein</keyword>
<keyword id="KW-0689">Ribosomal protein</keyword>
<keyword id="KW-0694">RNA-binding</keyword>
<keyword id="KW-0699">rRNA-binding</keyword>
<keyword id="KW-0820">tRNA-binding</keyword>
<protein>
    <recommendedName>
        <fullName evidence="2">Small ribosomal subunit protein uS12</fullName>
    </recommendedName>
    <alternativeName>
        <fullName evidence="4">30S ribosomal protein S12</fullName>
    </alternativeName>
</protein>